<comment type="function">
    <text evidence="1">Involved in mRNA degradation. Catalyzes the phosphorolysis of single-stranded polyribonucleotides processively in the 3'- to 5'-direction.</text>
</comment>
<comment type="catalytic activity">
    <reaction evidence="1">
        <text>RNA(n+1) + phosphate = RNA(n) + a ribonucleoside 5'-diphosphate</text>
        <dbReference type="Rhea" id="RHEA:22096"/>
        <dbReference type="Rhea" id="RHEA-COMP:14527"/>
        <dbReference type="Rhea" id="RHEA-COMP:17342"/>
        <dbReference type="ChEBI" id="CHEBI:43474"/>
        <dbReference type="ChEBI" id="CHEBI:57930"/>
        <dbReference type="ChEBI" id="CHEBI:140395"/>
        <dbReference type="EC" id="2.7.7.8"/>
    </reaction>
</comment>
<comment type="cofactor">
    <cofactor evidence="1">
        <name>Mg(2+)</name>
        <dbReference type="ChEBI" id="CHEBI:18420"/>
    </cofactor>
</comment>
<comment type="subunit">
    <text evidence="1">Component of the RNA degradosome, which is a multiprotein complex involved in RNA processing and mRNA degradation.</text>
</comment>
<comment type="subcellular location">
    <subcellularLocation>
        <location evidence="1">Cytoplasm</location>
    </subcellularLocation>
</comment>
<comment type="similarity">
    <text evidence="1">Belongs to the polyribonucleotide nucleotidyltransferase family.</text>
</comment>
<organism>
    <name type="scientific">Coxiella burnetii (strain RSA 493 / Nine Mile phase I)</name>
    <dbReference type="NCBI Taxonomy" id="227377"/>
    <lineage>
        <taxon>Bacteria</taxon>
        <taxon>Pseudomonadati</taxon>
        <taxon>Pseudomonadota</taxon>
        <taxon>Gammaproteobacteria</taxon>
        <taxon>Legionellales</taxon>
        <taxon>Coxiellaceae</taxon>
        <taxon>Coxiella</taxon>
    </lineage>
</organism>
<sequence>MNKIRKTFQYGKHEVTFETGEMARQATGAVVVRMGDTVLLVSVVAKKEAEEGRDFFPLTVNYQEKTYAAGKIPGGYFKREGRPTEKETLTSRLIDRPLRPLFPKGFTNEVQVIATVLSVDSKVPTDIPAILGASAAIGLSGIPFNGSLGAARVGYRGGEYLLNPSLDELKDSALDLVVAGTRDAVLMVESEAQELPESVMLGAVLHGHQAMQVAIQAIAEFIQEAGGAKWEWEPPTVNTALEKWVVEKSEAPLKKAYQIQEKTARQAQIQAIRDQLLADRAAEREGEENAVNEHELAVIFHELERRIVREQILTGQPRIDGRDTKTVRPITVKVGVLPRSHGSALFTRGETQALVVTTLGTERDAQSIDDLDGDRQEEFIFHYNFPPFCVGEVGFMSGPKRREIGHGRLAKRAVVPVVPTLDKFPYVIRVVSEILESNGSSSMASVCGSSLALMDAGVPTKAPVAGIAMGLIKENDKYAVLSDILGDEDHLGDMDFKVAGTSNGVTALQMDIKIEGITKEIMEQALDQAKEGRLHILSIMNKVLDKPRSQVSDLAPQYVTMKINPEKIRDVIGKGGVVIREITEATNCAIDISDDGTIKIAAHTTEEGEAAKRRIEELTAEVELGKVYEGTVVKITDFGAFVQILPNTQGLVHISQIAQERVENVRDYLEEGQVIRVKVIEIDRQGRVRLSMKQID</sequence>
<accession>Q83D87</accession>
<evidence type="ECO:0000255" key="1">
    <source>
        <dbReference type="HAMAP-Rule" id="MF_01595"/>
    </source>
</evidence>
<evidence type="ECO:0007829" key="2">
    <source>
        <dbReference type="PDB" id="4NBQ"/>
    </source>
</evidence>
<keyword id="KW-0002">3D-structure</keyword>
<keyword id="KW-0963">Cytoplasm</keyword>
<keyword id="KW-0460">Magnesium</keyword>
<keyword id="KW-0479">Metal-binding</keyword>
<keyword id="KW-0548">Nucleotidyltransferase</keyword>
<keyword id="KW-1185">Reference proteome</keyword>
<keyword id="KW-0694">RNA-binding</keyword>
<keyword id="KW-0808">Transferase</keyword>
<gene>
    <name evidence="1" type="primary">pnp</name>
    <name type="ordered locus">CBU_0852</name>
</gene>
<reference key="1">
    <citation type="journal article" date="2003" name="Proc. Natl. Acad. Sci. U.S.A.">
        <title>Complete genome sequence of the Q-fever pathogen, Coxiella burnetii.</title>
        <authorList>
            <person name="Seshadri R."/>
            <person name="Paulsen I.T."/>
            <person name="Eisen J.A."/>
            <person name="Read T.D."/>
            <person name="Nelson K.E."/>
            <person name="Nelson W.C."/>
            <person name="Ward N.L."/>
            <person name="Tettelin H."/>
            <person name="Davidsen T.M."/>
            <person name="Beanan M.J."/>
            <person name="DeBoy R.T."/>
            <person name="Daugherty S.C."/>
            <person name="Brinkac L.M."/>
            <person name="Madupu R."/>
            <person name="Dodson R.J."/>
            <person name="Khouri H.M."/>
            <person name="Lee K.H."/>
            <person name="Carty H.A."/>
            <person name="Scanlan D."/>
            <person name="Heinzen R.A."/>
            <person name="Thompson H.A."/>
            <person name="Samuel J.E."/>
            <person name="Fraser C.M."/>
            <person name="Heidelberg J.F."/>
        </authorList>
    </citation>
    <scope>NUCLEOTIDE SEQUENCE [LARGE SCALE GENOMIC DNA]</scope>
    <source>
        <strain>RSA 493 / Nine Mile phase I</strain>
    </source>
</reference>
<proteinExistence type="evidence at protein level"/>
<protein>
    <recommendedName>
        <fullName evidence="1">Polyribonucleotide nucleotidyltransferase</fullName>
        <ecNumber evidence="1">2.7.7.8</ecNumber>
    </recommendedName>
    <alternativeName>
        <fullName evidence="1">Polynucleotide phosphorylase</fullName>
        <shortName evidence="1">PNPase</shortName>
    </alternativeName>
</protein>
<dbReference type="EC" id="2.7.7.8" evidence="1"/>
<dbReference type="EMBL" id="AE016828">
    <property type="protein sequence ID" value="AAO90386.1"/>
    <property type="molecule type" value="Genomic_DNA"/>
</dbReference>
<dbReference type="RefSeq" id="NP_819872.1">
    <property type="nucleotide sequence ID" value="NC_002971.4"/>
</dbReference>
<dbReference type="RefSeq" id="WP_010957848.1">
    <property type="nucleotide sequence ID" value="NC_002971.4"/>
</dbReference>
<dbReference type="PDB" id="4NBQ">
    <property type="method" value="X-ray"/>
    <property type="resolution" value="2.91 A"/>
    <property type="chains" value="A/B/C=1-696"/>
</dbReference>
<dbReference type="PDBsum" id="4NBQ"/>
<dbReference type="SMR" id="Q83D87"/>
<dbReference type="STRING" id="227377.CBU_0852"/>
<dbReference type="DNASU" id="1208745"/>
<dbReference type="EnsemblBacteria" id="AAO90386">
    <property type="protein sequence ID" value="AAO90386"/>
    <property type="gene ID" value="CBU_0852"/>
</dbReference>
<dbReference type="GeneID" id="1208745"/>
<dbReference type="KEGG" id="cbu:CBU_0852"/>
<dbReference type="PATRIC" id="fig|227377.7.peg.837"/>
<dbReference type="eggNOG" id="COG1185">
    <property type="taxonomic scope" value="Bacteria"/>
</dbReference>
<dbReference type="HOGENOM" id="CLU_004217_2_2_6"/>
<dbReference type="OrthoDB" id="9804305at2"/>
<dbReference type="EvolutionaryTrace" id="Q83D87"/>
<dbReference type="Proteomes" id="UP000002671">
    <property type="component" value="Chromosome"/>
</dbReference>
<dbReference type="GO" id="GO:0005829">
    <property type="term" value="C:cytosol"/>
    <property type="evidence" value="ECO:0000318"/>
    <property type="project" value="GO_Central"/>
</dbReference>
<dbReference type="GO" id="GO:0000175">
    <property type="term" value="F:3'-5'-RNA exonuclease activity"/>
    <property type="evidence" value="ECO:0000318"/>
    <property type="project" value="GO_Central"/>
</dbReference>
<dbReference type="GO" id="GO:0000287">
    <property type="term" value="F:magnesium ion binding"/>
    <property type="evidence" value="ECO:0007669"/>
    <property type="project" value="UniProtKB-UniRule"/>
</dbReference>
<dbReference type="GO" id="GO:0004654">
    <property type="term" value="F:polyribonucleotide nucleotidyltransferase activity"/>
    <property type="evidence" value="ECO:0000318"/>
    <property type="project" value="GO_Central"/>
</dbReference>
<dbReference type="GO" id="GO:0003723">
    <property type="term" value="F:RNA binding"/>
    <property type="evidence" value="ECO:0007669"/>
    <property type="project" value="UniProtKB-UniRule"/>
</dbReference>
<dbReference type="GO" id="GO:0006402">
    <property type="term" value="P:mRNA catabolic process"/>
    <property type="evidence" value="ECO:0007669"/>
    <property type="project" value="UniProtKB-UniRule"/>
</dbReference>
<dbReference type="GO" id="GO:0006401">
    <property type="term" value="P:RNA catabolic process"/>
    <property type="evidence" value="ECO:0000318"/>
    <property type="project" value="GO_Central"/>
</dbReference>
<dbReference type="GO" id="GO:0006396">
    <property type="term" value="P:RNA processing"/>
    <property type="evidence" value="ECO:0007669"/>
    <property type="project" value="InterPro"/>
</dbReference>
<dbReference type="CDD" id="cd02393">
    <property type="entry name" value="KH-I_PNPase"/>
    <property type="match status" value="1"/>
</dbReference>
<dbReference type="CDD" id="cd11363">
    <property type="entry name" value="RNase_PH_PNPase_1"/>
    <property type="match status" value="1"/>
</dbReference>
<dbReference type="CDD" id="cd11364">
    <property type="entry name" value="RNase_PH_PNPase_2"/>
    <property type="match status" value="1"/>
</dbReference>
<dbReference type="CDD" id="cd04472">
    <property type="entry name" value="S1_PNPase"/>
    <property type="match status" value="1"/>
</dbReference>
<dbReference type="FunFam" id="2.40.50.140:FF:000023">
    <property type="entry name" value="Polyribonucleotide nucleotidyltransferase"/>
    <property type="match status" value="1"/>
</dbReference>
<dbReference type="FunFam" id="3.30.1370.10:FF:000001">
    <property type="entry name" value="Polyribonucleotide nucleotidyltransferase"/>
    <property type="match status" value="1"/>
</dbReference>
<dbReference type="FunFam" id="3.30.230.70:FF:000001">
    <property type="entry name" value="Polyribonucleotide nucleotidyltransferase"/>
    <property type="match status" value="1"/>
</dbReference>
<dbReference type="FunFam" id="3.30.230.70:FF:000002">
    <property type="entry name" value="Polyribonucleotide nucleotidyltransferase"/>
    <property type="match status" value="1"/>
</dbReference>
<dbReference type="Gene3D" id="3.30.230.70">
    <property type="entry name" value="GHMP Kinase, N-terminal domain"/>
    <property type="match status" value="2"/>
</dbReference>
<dbReference type="Gene3D" id="3.30.1370.10">
    <property type="entry name" value="K Homology domain, type 1"/>
    <property type="match status" value="1"/>
</dbReference>
<dbReference type="Gene3D" id="2.40.50.140">
    <property type="entry name" value="Nucleic acid-binding proteins"/>
    <property type="match status" value="1"/>
</dbReference>
<dbReference type="HAMAP" id="MF_01595">
    <property type="entry name" value="PNPase"/>
    <property type="match status" value="1"/>
</dbReference>
<dbReference type="InterPro" id="IPR001247">
    <property type="entry name" value="ExoRNase_PH_dom1"/>
</dbReference>
<dbReference type="InterPro" id="IPR015847">
    <property type="entry name" value="ExoRNase_PH_dom2"/>
</dbReference>
<dbReference type="InterPro" id="IPR036345">
    <property type="entry name" value="ExoRNase_PH_dom2_sf"/>
</dbReference>
<dbReference type="InterPro" id="IPR004087">
    <property type="entry name" value="KH_dom"/>
</dbReference>
<dbReference type="InterPro" id="IPR004088">
    <property type="entry name" value="KH_dom_type_1"/>
</dbReference>
<dbReference type="InterPro" id="IPR036612">
    <property type="entry name" value="KH_dom_type_1_sf"/>
</dbReference>
<dbReference type="InterPro" id="IPR012340">
    <property type="entry name" value="NA-bd_OB-fold"/>
</dbReference>
<dbReference type="InterPro" id="IPR012162">
    <property type="entry name" value="PNPase"/>
</dbReference>
<dbReference type="InterPro" id="IPR027408">
    <property type="entry name" value="PNPase/RNase_PH_dom_sf"/>
</dbReference>
<dbReference type="InterPro" id="IPR015848">
    <property type="entry name" value="PNPase_PH_RNA-bd_bac/org-type"/>
</dbReference>
<dbReference type="InterPro" id="IPR036456">
    <property type="entry name" value="PNPase_PH_RNA-bd_sf"/>
</dbReference>
<dbReference type="InterPro" id="IPR020568">
    <property type="entry name" value="Ribosomal_Su5_D2-typ_SF"/>
</dbReference>
<dbReference type="InterPro" id="IPR003029">
    <property type="entry name" value="S1_domain"/>
</dbReference>
<dbReference type="NCBIfam" id="TIGR03591">
    <property type="entry name" value="polynuc_phos"/>
    <property type="match status" value="1"/>
</dbReference>
<dbReference type="NCBIfam" id="NF008805">
    <property type="entry name" value="PRK11824.1"/>
    <property type="match status" value="1"/>
</dbReference>
<dbReference type="PANTHER" id="PTHR11252">
    <property type="entry name" value="POLYRIBONUCLEOTIDE NUCLEOTIDYLTRANSFERASE"/>
    <property type="match status" value="1"/>
</dbReference>
<dbReference type="PANTHER" id="PTHR11252:SF0">
    <property type="entry name" value="POLYRIBONUCLEOTIDE NUCLEOTIDYLTRANSFERASE 1, MITOCHONDRIAL"/>
    <property type="match status" value="1"/>
</dbReference>
<dbReference type="Pfam" id="PF00013">
    <property type="entry name" value="KH_1"/>
    <property type="match status" value="1"/>
</dbReference>
<dbReference type="Pfam" id="PF03726">
    <property type="entry name" value="PNPase"/>
    <property type="match status" value="1"/>
</dbReference>
<dbReference type="Pfam" id="PF01138">
    <property type="entry name" value="RNase_PH"/>
    <property type="match status" value="2"/>
</dbReference>
<dbReference type="Pfam" id="PF03725">
    <property type="entry name" value="RNase_PH_C"/>
    <property type="match status" value="2"/>
</dbReference>
<dbReference type="Pfam" id="PF00575">
    <property type="entry name" value="S1"/>
    <property type="match status" value="1"/>
</dbReference>
<dbReference type="PIRSF" id="PIRSF005499">
    <property type="entry name" value="PNPase"/>
    <property type="match status" value="1"/>
</dbReference>
<dbReference type="SMART" id="SM00322">
    <property type="entry name" value="KH"/>
    <property type="match status" value="1"/>
</dbReference>
<dbReference type="SMART" id="SM00316">
    <property type="entry name" value="S1"/>
    <property type="match status" value="1"/>
</dbReference>
<dbReference type="SUPFAM" id="SSF54791">
    <property type="entry name" value="Eukaryotic type KH-domain (KH-domain type I)"/>
    <property type="match status" value="1"/>
</dbReference>
<dbReference type="SUPFAM" id="SSF50249">
    <property type="entry name" value="Nucleic acid-binding proteins"/>
    <property type="match status" value="1"/>
</dbReference>
<dbReference type="SUPFAM" id="SSF46915">
    <property type="entry name" value="Polynucleotide phosphorylase/guanosine pentaphosphate synthase (PNPase/GPSI), domain 3"/>
    <property type="match status" value="1"/>
</dbReference>
<dbReference type="SUPFAM" id="SSF55666">
    <property type="entry name" value="Ribonuclease PH domain 2-like"/>
    <property type="match status" value="2"/>
</dbReference>
<dbReference type="SUPFAM" id="SSF54211">
    <property type="entry name" value="Ribosomal protein S5 domain 2-like"/>
    <property type="match status" value="2"/>
</dbReference>
<dbReference type="PROSITE" id="PS50084">
    <property type="entry name" value="KH_TYPE_1"/>
    <property type="match status" value="1"/>
</dbReference>
<dbReference type="PROSITE" id="PS50126">
    <property type="entry name" value="S1"/>
    <property type="match status" value="1"/>
</dbReference>
<feature type="chain" id="PRO_0000329612" description="Polyribonucleotide nucleotidyltransferase">
    <location>
        <begin position="1"/>
        <end position="696"/>
    </location>
</feature>
<feature type="domain" description="KH" evidence="1">
    <location>
        <begin position="556"/>
        <end position="615"/>
    </location>
</feature>
<feature type="domain" description="S1 motif" evidence="1">
    <location>
        <begin position="625"/>
        <end position="693"/>
    </location>
</feature>
<feature type="binding site" evidence="1">
    <location>
        <position position="489"/>
    </location>
    <ligand>
        <name>Mg(2+)</name>
        <dbReference type="ChEBI" id="CHEBI:18420"/>
    </ligand>
</feature>
<feature type="binding site" evidence="1">
    <location>
        <position position="495"/>
    </location>
    <ligand>
        <name>Mg(2+)</name>
        <dbReference type="ChEBI" id="CHEBI:18420"/>
    </ligand>
</feature>
<feature type="strand" evidence="2">
    <location>
        <begin position="4"/>
        <end position="10"/>
    </location>
</feature>
<feature type="strand" evidence="2">
    <location>
        <begin position="13"/>
        <end position="22"/>
    </location>
</feature>
<feature type="strand" evidence="2">
    <location>
        <begin position="26"/>
        <end position="34"/>
    </location>
</feature>
<feature type="strand" evidence="2">
    <location>
        <begin position="37"/>
        <end position="45"/>
    </location>
</feature>
<feature type="strand" evidence="2">
    <location>
        <begin position="58"/>
        <end position="64"/>
    </location>
</feature>
<feature type="helix" evidence="2">
    <location>
        <begin position="66"/>
        <end position="69"/>
    </location>
</feature>
<feature type="helix" evidence="2">
    <location>
        <begin position="85"/>
        <end position="98"/>
    </location>
</feature>
<feature type="helix" evidence="2">
    <location>
        <begin position="99"/>
        <end position="101"/>
    </location>
</feature>
<feature type="strand" evidence="2">
    <location>
        <begin position="110"/>
        <end position="118"/>
    </location>
</feature>
<feature type="helix" evidence="2">
    <location>
        <begin position="126"/>
        <end position="140"/>
    </location>
</feature>
<feature type="strand" evidence="2">
    <location>
        <begin position="149"/>
        <end position="156"/>
    </location>
</feature>
<feature type="strand" evidence="2">
    <location>
        <begin position="159"/>
        <end position="163"/>
    </location>
</feature>
<feature type="helix" evidence="2">
    <location>
        <begin position="166"/>
        <end position="169"/>
    </location>
</feature>
<feature type="strand" evidence="2">
    <location>
        <begin position="173"/>
        <end position="180"/>
    </location>
</feature>
<feature type="strand" evidence="2">
    <location>
        <begin position="185"/>
        <end position="195"/>
    </location>
</feature>
<feature type="helix" evidence="2">
    <location>
        <begin position="197"/>
        <end position="210"/>
    </location>
</feature>
<feature type="helix" evidence="2">
    <location>
        <begin position="212"/>
        <end position="225"/>
    </location>
</feature>
<feature type="helix" evidence="2">
    <location>
        <begin position="239"/>
        <end position="256"/>
    </location>
</feature>
<feature type="helix" evidence="2">
    <location>
        <begin position="262"/>
        <end position="284"/>
    </location>
</feature>
<feature type="strand" evidence="2">
    <location>
        <begin position="287"/>
        <end position="289"/>
    </location>
</feature>
<feature type="helix" evidence="2">
    <location>
        <begin position="294"/>
        <end position="313"/>
    </location>
</feature>
<feature type="strand" evidence="2">
    <location>
        <begin position="330"/>
        <end position="334"/>
    </location>
</feature>
<feature type="strand" evidence="2">
    <location>
        <begin position="340"/>
        <end position="348"/>
    </location>
</feature>
<feature type="strand" evidence="2">
    <location>
        <begin position="351"/>
        <end position="360"/>
    </location>
</feature>
<feature type="helix" evidence="2">
    <location>
        <begin position="362"/>
        <end position="364"/>
    </location>
</feature>
<feature type="strand" evidence="2">
    <location>
        <begin position="366"/>
        <end position="368"/>
    </location>
</feature>
<feature type="strand" evidence="2">
    <location>
        <begin position="374"/>
        <end position="384"/>
    </location>
</feature>
<feature type="helix" evidence="2">
    <location>
        <begin position="387"/>
        <end position="390"/>
    </location>
</feature>
<feature type="helix" evidence="2">
    <location>
        <begin position="401"/>
        <end position="414"/>
    </location>
</feature>
<feature type="helix" evidence="2">
    <location>
        <begin position="415"/>
        <end position="417"/>
    </location>
</feature>
<feature type="turn" evidence="2">
    <location>
        <begin position="421"/>
        <end position="423"/>
    </location>
</feature>
<feature type="strand" evidence="2">
    <location>
        <begin position="427"/>
        <end position="436"/>
    </location>
</feature>
<feature type="helix" evidence="2">
    <location>
        <begin position="441"/>
        <end position="455"/>
    </location>
</feature>
<feature type="strand" evidence="2">
    <location>
        <begin position="465"/>
        <end position="474"/>
    </location>
</feature>
<feature type="strand" evidence="2">
    <location>
        <begin position="477"/>
        <end position="483"/>
    </location>
</feature>
<feature type="turn" evidence="2">
    <location>
        <begin position="487"/>
        <end position="491"/>
    </location>
</feature>
<feature type="strand" evidence="2">
    <location>
        <begin position="492"/>
        <end position="500"/>
    </location>
</feature>
<feature type="strand" evidence="2">
    <location>
        <begin position="505"/>
        <end position="512"/>
    </location>
</feature>
<feature type="helix" evidence="2">
    <location>
        <begin position="519"/>
        <end position="543"/>
    </location>
</feature>
<feature type="strand" evidence="2">
    <location>
        <begin position="557"/>
        <end position="562"/>
    </location>
</feature>
<feature type="helix" evidence="2">
    <location>
        <begin position="565"/>
        <end position="567"/>
    </location>
</feature>
<feature type="helix" evidence="2">
    <location>
        <begin position="568"/>
        <end position="572"/>
    </location>
</feature>
<feature type="helix" evidence="2">
    <location>
        <begin position="577"/>
        <end position="586"/>
    </location>
</feature>
<feature type="strand" evidence="2">
    <location>
        <begin position="589"/>
        <end position="592"/>
    </location>
</feature>
<feature type="strand" evidence="2">
    <location>
        <begin position="594"/>
        <end position="604"/>
    </location>
</feature>
<feature type="helix" evidence="2">
    <location>
        <begin position="605"/>
        <end position="619"/>
    </location>
</feature>
<feature type="turn" evidence="2">
    <location>
        <begin position="655"/>
        <end position="657"/>
    </location>
</feature>
<name>PNP_COXBU</name>